<gene>
    <name evidence="1" type="primary">rpsZ</name>
    <name evidence="1" type="synonym">rpsN</name>
    <name type="ordered locus">Clos_0505</name>
</gene>
<organism>
    <name type="scientific">Alkaliphilus oremlandii (strain OhILAs)</name>
    <name type="common">Clostridium oremlandii (strain OhILAs)</name>
    <dbReference type="NCBI Taxonomy" id="350688"/>
    <lineage>
        <taxon>Bacteria</taxon>
        <taxon>Bacillati</taxon>
        <taxon>Bacillota</taxon>
        <taxon>Clostridia</taxon>
        <taxon>Peptostreptococcales</taxon>
        <taxon>Natronincolaceae</taxon>
        <taxon>Alkaliphilus</taxon>
    </lineage>
</organism>
<evidence type="ECO:0000255" key="1">
    <source>
        <dbReference type="HAMAP-Rule" id="MF_01364"/>
    </source>
</evidence>
<evidence type="ECO:0000305" key="2"/>
<reference key="1">
    <citation type="submission" date="2007-10" db="EMBL/GenBank/DDBJ databases">
        <title>Complete genome of Alkaliphilus oremlandii OhILAs.</title>
        <authorList>
            <person name="Copeland A."/>
            <person name="Lucas S."/>
            <person name="Lapidus A."/>
            <person name="Barry K."/>
            <person name="Detter J.C."/>
            <person name="Glavina del Rio T."/>
            <person name="Hammon N."/>
            <person name="Israni S."/>
            <person name="Dalin E."/>
            <person name="Tice H."/>
            <person name="Pitluck S."/>
            <person name="Chain P."/>
            <person name="Malfatti S."/>
            <person name="Shin M."/>
            <person name="Vergez L."/>
            <person name="Schmutz J."/>
            <person name="Larimer F."/>
            <person name="Land M."/>
            <person name="Hauser L."/>
            <person name="Kyrpides N."/>
            <person name="Mikhailova N."/>
            <person name="Stolz J.F."/>
            <person name="Dawson A."/>
            <person name="Fisher E."/>
            <person name="Crable B."/>
            <person name="Perera E."/>
            <person name="Lisak J."/>
            <person name="Ranganathan M."/>
            <person name="Basu P."/>
            <person name="Richardson P."/>
        </authorList>
    </citation>
    <scope>NUCLEOTIDE SEQUENCE [LARGE SCALE GENOMIC DNA]</scope>
    <source>
        <strain>OhILAs</strain>
    </source>
</reference>
<feature type="chain" id="PRO_1000067921" description="Small ribosomal subunit protein uS14">
    <location>
        <begin position="1"/>
        <end position="61"/>
    </location>
</feature>
<feature type="binding site" evidence="1">
    <location>
        <position position="24"/>
    </location>
    <ligand>
        <name>Zn(2+)</name>
        <dbReference type="ChEBI" id="CHEBI:29105"/>
    </ligand>
</feature>
<feature type="binding site" evidence="1">
    <location>
        <position position="27"/>
    </location>
    <ligand>
        <name>Zn(2+)</name>
        <dbReference type="ChEBI" id="CHEBI:29105"/>
    </ligand>
</feature>
<feature type="binding site" evidence="1">
    <location>
        <position position="40"/>
    </location>
    <ligand>
        <name>Zn(2+)</name>
        <dbReference type="ChEBI" id="CHEBI:29105"/>
    </ligand>
</feature>
<feature type="binding site" evidence="1">
    <location>
        <position position="43"/>
    </location>
    <ligand>
        <name>Zn(2+)</name>
        <dbReference type="ChEBI" id="CHEBI:29105"/>
    </ligand>
</feature>
<comment type="function">
    <text evidence="1">Binds 16S rRNA, required for the assembly of 30S particles and may also be responsible for determining the conformation of the 16S rRNA at the A site.</text>
</comment>
<comment type="cofactor">
    <cofactor evidence="1">
        <name>Zn(2+)</name>
        <dbReference type="ChEBI" id="CHEBI:29105"/>
    </cofactor>
    <text evidence="1">Binds 1 zinc ion per subunit.</text>
</comment>
<comment type="subunit">
    <text evidence="1">Part of the 30S ribosomal subunit. Contacts proteins S3 and S10.</text>
</comment>
<comment type="similarity">
    <text evidence="1">Belongs to the universal ribosomal protein uS14 family. Zinc-binding uS14 subfamily.</text>
</comment>
<protein>
    <recommendedName>
        <fullName evidence="1">Small ribosomal subunit protein uS14</fullName>
    </recommendedName>
    <alternativeName>
        <fullName evidence="2">30S ribosomal protein S14 type Z</fullName>
    </alternativeName>
</protein>
<accession>A8MLF3</accession>
<keyword id="KW-0479">Metal-binding</keyword>
<keyword id="KW-1185">Reference proteome</keyword>
<keyword id="KW-0687">Ribonucleoprotein</keyword>
<keyword id="KW-0689">Ribosomal protein</keyword>
<keyword id="KW-0694">RNA-binding</keyword>
<keyword id="KW-0699">rRNA-binding</keyword>
<keyword id="KW-0862">Zinc</keyword>
<sequence>MAKTSLKVKQQRTQKYQTREYSRCKICGRPHAYLRKFGICRICFRELAYKGQIPGVKKASW</sequence>
<proteinExistence type="inferred from homology"/>
<name>RS14Z_ALKOO</name>
<dbReference type="EMBL" id="CP000853">
    <property type="protein sequence ID" value="ABW18067.1"/>
    <property type="molecule type" value="Genomic_DNA"/>
</dbReference>
<dbReference type="RefSeq" id="WP_012158381.1">
    <property type="nucleotide sequence ID" value="NC_009922.1"/>
</dbReference>
<dbReference type="SMR" id="A8MLF3"/>
<dbReference type="STRING" id="350688.Clos_0505"/>
<dbReference type="KEGG" id="aoe:Clos_0505"/>
<dbReference type="eggNOG" id="COG0199">
    <property type="taxonomic scope" value="Bacteria"/>
</dbReference>
<dbReference type="HOGENOM" id="CLU_139869_3_0_9"/>
<dbReference type="OrthoDB" id="9810484at2"/>
<dbReference type="Proteomes" id="UP000000269">
    <property type="component" value="Chromosome"/>
</dbReference>
<dbReference type="GO" id="GO:0005737">
    <property type="term" value="C:cytoplasm"/>
    <property type="evidence" value="ECO:0007669"/>
    <property type="project" value="UniProtKB-ARBA"/>
</dbReference>
<dbReference type="GO" id="GO:0015935">
    <property type="term" value="C:small ribosomal subunit"/>
    <property type="evidence" value="ECO:0007669"/>
    <property type="project" value="TreeGrafter"/>
</dbReference>
<dbReference type="GO" id="GO:0019843">
    <property type="term" value="F:rRNA binding"/>
    <property type="evidence" value="ECO:0007669"/>
    <property type="project" value="UniProtKB-UniRule"/>
</dbReference>
<dbReference type="GO" id="GO:0003735">
    <property type="term" value="F:structural constituent of ribosome"/>
    <property type="evidence" value="ECO:0007669"/>
    <property type="project" value="InterPro"/>
</dbReference>
<dbReference type="GO" id="GO:0008270">
    <property type="term" value="F:zinc ion binding"/>
    <property type="evidence" value="ECO:0007669"/>
    <property type="project" value="UniProtKB-UniRule"/>
</dbReference>
<dbReference type="GO" id="GO:0006412">
    <property type="term" value="P:translation"/>
    <property type="evidence" value="ECO:0007669"/>
    <property type="project" value="UniProtKB-UniRule"/>
</dbReference>
<dbReference type="FunFam" id="4.10.830.10:FF:000001">
    <property type="entry name" value="30S ribosomal protein S14 type Z"/>
    <property type="match status" value="1"/>
</dbReference>
<dbReference type="Gene3D" id="4.10.830.10">
    <property type="entry name" value="30s Ribosomal Protein S14, Chain N"/>
    <property type="match status" value="1"/>
</dbReference>
<dbReference type="HAMAP" id="MF_01364_B">
    <property type="entry name" value="Ribosomal_uS14_2_B"/>
    <property type="match status" value="1"/>
</dbReference>
<dbReference type="InterPro" id="IPR001209">
    <property type="entry name" value="Ribosomal_uS14"/>
</dbReference>
<dbReference type="InterPro" id="IPR023053">
    <property type="entry name" value="Ribosomal_uS14_bact"/>
</dbReference>
<dbReference type="InterPro" id="IPR018271">
    <property type="entry name" value="Ribosomal_uS14_CS"/>
</dbReference>
<dbReference type="InterPro" id="IPR043140">
    <property type="entry name" value="Ribosomal_uS14_sf"/>
</dbReference>
<dbReference type="NCBIfam" id="NF005974">
    <property type="entry name" value="PRK08061.1"/>
    <property type="match status" value="1"/>
</dbReference>
<dbReference type="PANTHER" id="PTHR19836">
    <property type="entry name" value="30S RIBOSOMAL PROTEIN S14"/>
    <property type="match status" value="1"/>
</dbReference>
<dbReference type="PANTHER" id="PTHR19836:SF19">
    <property type="entry name" value="SMALL RIBOSOMAL SUBUNIT PROTEIN US14M"/>
    <property type="match status" value="1"/>
</dbReference>
<dbReference type="Pfam" id="PF00253">
    <property type="entry name" value="Ribosomal_S14"/>
    <property type="match status" value="1"/>
</dbReference>
<dbReference type="SUPFAM" id="SSF57716">
    <property type="entry name" value="Glucocorticoid receptor-like (DNA-binding domain)"/>
    <property type="match status" value="1"/>
</dbReference>
<dbReference type="PROSITE" id="PS00527">
    <property type="entry name" value="RIBOSOMAL_S14"/>
    <property type="match status" value="1"/>
</dbReference>